<feature type="chain" id="PRO_0000425569" description="L-threo-3-deoxy-hexylosonate aldolase">
    <location>
        <begin position="1"/>
        <end position="315"/>
    </location>
</feature>
<feature type="active site" description="Schiff-base intermediate with substrate" evidence="1">
    <location>
        <position position="174"/>
    </location>
</feature>
<feature type="binding site" evidence="1">
    <location>
        <begin position="50"/>
        <end position="51"/>
    </location>
    <ligand>
        <name>substrate</name>
    </ligand>
</feature>
<feature type="site" description="Involved in proton transfer during cleavage" evidence="1">
    <location>
        <position position="145"/>
    </location>
</feature>
<feature type="sequence conflict" description="In Ref. 1; AA sequence." evidence="4" ref="1">
    <original>N</original>
    <variation>D</variation>
    <location>
        <position position="51"/>
    </location>
</feature>
<evidence type="ECO:0000250" key="1"/>
<evidence type="ECO:0000269" key="2">
    <source>
    </source>
</evidence>
<evidence type="ECO:0000269" key="3">
    <source>
    </source>
</evidence>
<evidence type="ECO:0000305" key="4"/>
<proteinExistence type="evidence at protein level"/>
<name>LGA1_HYPJE</name>
<keyword id="KW-0119">Carbohydrate metabolism</keyword>
<keyword id="KW-0903">Direct protein sequencing</keyword>
<keyword id="KW-0456">Lyase</keyword>
<comment type="function">
    <text evidence="2 3">Mediates the conversion of 2-dehydro-3-deoxy-L-galactonate to pyruvate and L-glyceraldehyde in D-galacturonate catabolic process.</text>
</comment>
<comment type="catalytic activity">
    <reaction evidence="2">
        <text>2-dehydro-3-deoxy-L-galactonate = L-glyceraldehyde + pyruvate</text>
        <dbReference type="Rhea" id="RHEA:38107"/>
        <dbReference type="ChEBI" id="CHEBI:15361"/>
        <dbReference type="ChEBI" id="CHEBI:27975"/>
        <dbReference type="ChEBI" id="CHEBI:75545"/>
        <dbReference type="EC" id="4.1.2.54"/>
    </reaction>
</comment>
<comment type="biophysicochemical properties">
    <kinetics>
        <KM evidence="2">3.5 mM for 2-dehydro-3-deoxy-L-galactonate</KM>
        <KM evidence="2">3.8 mM for D-glycero-3-deoxy-pentulosonate</KM>
        <KM evidence="2">0.5 mM for pyruvate</KM>
        <KM evidence="2">1.2 mM for L-glyceraldehyde</KM>
        <KM evidence="2">6.5 mM for glycolaldehyde</KM>
        <Vmax evidence="2">20.3 umol/min/mg enzyme with 2-dehydro-3-deoxy-L-galactonate as substrate</Vmax>
        <Vmax evidence="2">12.5 umol/min/mg enzyme with D-glycero-3-deoxy-pentulosonate as substrate</Vmax>
        <Vmax evidence="2">6.5 umol/min/mg enzyme with pyruvate and L-glyceraldehyde as substrates</Vmax>
        <Vmax evidence="2">0.9 umol/min/mg enzyme with glycolaldehyde as substrate</Vmax>
    </kinetics>
</comment>
<comment type="pathway">
    <text evidence="2">Carbohydrate acid metabolism.</text>
</comment>
<comment type="disruption phenotype">
    <text evidence="2">Cells are unable to grow on D-galacturonate.</text>
</comment>
<comment type="similarity">
    <text evidence="4">Belongs to the DapA family.</text>
</comment>
<organism>
    <name type="scientific">Hypocrea jecorina</name>
    <name type="common">Trichoderma reesei</name>
    <dbReference type="NCBI Taxonomy" id="51453"/>
    <lineage>
        <taxon>Eukaryota</taxon>
        <taxon>Fungi</taxon>
        <taxon>Dikarya</taxon>
        <taxon>Ascomycota</taxon>
        <taxon>Pezizomycotina</taxon>
        <taxon>Sordariomycetes</taxon>
        <taxon>Hypocreomycetidae</taxon>
        <taxon>Hypocreales</taxon>
        <taxon>Hypocreaceae</taxon>
        <taxon>Trichoderma</taxon>
    </lineage>
</organism>
<dbReference type="EC" id="4.1.2.54"/>
<dbReference type="EMBL" id="EF203091">
    <property type="protein sequence ID" value="ABP04235.1"/>
    <property type="molecule type" value="mRNA"/>
</dbReference>
<dbReference type="EMBL" id="EF563987">
    <property type="protein sequence ID" value="ABQ53584.1"/>
    <property type="molecule type" value="Genomic_DNA"/>
</dbReference>
<dbReference type="SMR" id="A6Y9S5"/>
<dbReference type="KEGG" id="ag:ABP04235"/>
<dbReference type="OMA" id="QAIKLSM"/>
<dbReference type="BioCyc" id="MetaCyc:MONOMER-15605"/>
<dbReference type="BRENDA" id="4.1.2.54">
    <property type="organism ID" value="6451"/>
</dbReference>
<dbReference type="SABIO-RK" id="A6Y9S5"/>
<dbReference type="GO" id="GO:0008840">
    <property type="term" value="F:4-hydroxy-tetrahydrodipicolinate synthase activity"/>
    <property type="evidence" value="ECO:0007669"/>
    <property type="project" value="TreeGrafter"/>
</dbReference>
<dbReference type="GO" id="GO:0016832">
    <property type="term" value="F:aldehyde-lyase activity"/>
    <property type="evidence" value="ECO:0000314"/>
    <property type="project" value="UniProtKB"/>
</dbReference>
<dbReference type="GO" id="GO:0019698">
    <property type="term" value="P:D-galacturonate catabolic process"/>
    <property type="evidence" value="ECO:0000314"/>
    <property type="project" value="UniProtKB"/>
</dbReference>
<dbReference type="CDD" id="cd00408">
    <property type="entry name" value="DHDPS-like"/>
    <property type="match status" value="1"/>
</dbReference>
<dbReference type="FunFam" id="3.20.20.70:FF:000371">
    <property type="entry name" value="Putative 2-keto-3-deoxy-L-galactonate aldolase"/>
    <property type="match status" value="1"/>
</dbReference>
<dbReference type="Gene3D" id="3.20.20.70">
    <property type="entry name" value="Aldolase class I"/>
    <property type="match status" value="1"/>
</dbReference>
<dbReference type="InterPro" id="IPR013785">
    <property type="entry name" value="Aldolase_TIM"/>
</dbReference>
<dbReference type="InterPro" id="IPR002220">
    <property type="entry name" value="DapA-like"/>
</dbReference>
<dbReference type="PANTHER" id="PTHR12128">
    <property type="entry name" value="DIHYDRODIPICOLINATE SYNTHASE"/>
    <property type="match status" value="1"/>
</dbReference>
<dbReference type="PANTHER" id="PTHR12128:SF24">
    <property type="entry name" value="DIHYDRODIPICOLINATE SYNTHETASE FAMILY PROTEIN (AFU_ORTHOLOGUE AFUA_3G11920)"/>
    <property type="match status" value="1"/>
</dbReference>
<dbReference type="Pfam" id="PF00701">
    <property type="entry name" value="DHDPS"/>
    <property type="match status" value="1"/>
</dbReference>
<dbReference type="PIRSF" id="PIRSF001365">
    <property type="entry name" value="DHDPS"/>
    <property type="match status" value="1"/>
</dbReference>
<dbReference type="PRINTS" id="PR00146">
    <property type="entry name" value="DHPICSNTHASE"/>
</dbReference>
<dbReference type="SMART" id="SM01130">
    <property type="entry name" value="DHDPS"/>
    <property type="match status" value="1"/>
</dbReference>
<dbReference type="SUPFAM" id="SSF51569">
    <property type="entry name" value="Aldolase"/>
    <property type="match status" value="1"/>
</dbReference>
<reference key="1">
    <citation type="journal article" date="2007" name="J. Biol. Chem.">
        <title>The missing link in the fungal D-galacturonate pathway: identification of the L-threo-3-deoxy-hexulosonate aldolase.</title>
        <authorList>
            <person name="Hilditch S."/>
            <person name="Berghall S."/>
            <person name="Kalkkinen N."/>
            <person name="Penttila M."/>
            <person name="Richard P."/>
        </authorList>
    </citation>
    <scope>NUCLEOTIDE SEQUENCE [MRNA]</scope>
    <scope>PROTEIN SEQUENCE OF 44-59; 77-91; 104-119 AND 277-287</scope>
    <scope>FUNCTION</scope>
    <scope>CATALYTIC ACTIVITY</scope>
    <scope>BIOPHYSICOCHEMICAL PROPERTIES</scope>
    <scope>PATHWAY</scope>
    <scope>DISRUPTION PHENOTYPE</scope>
    <source>
        <strain>VTT-D-80133</strain>
    </source>
</reference>
<reference key="2">
    <citation type="journal article" date="2008" name="Fungal Genet. Biol.">
        <title>An evolutionary conserved d-galacturonic acid metabolic pathway operates across filamentous fungi capable of pectin degradation.</title>
        <authorList>
            <person name="Martens-Uzunova E.S."/>
            <person name="Schaap P.J."/>
        </authorList>
    </citation>
    <scope>NUCLEOTIDE SEQUENCE [GENOMIC DNA]</scope>
    <scope>FUNCTION</scope>
    <source>
        <strain>CBS 383.78</strain>
    </source>
</reference>
<accession>A6Y9S5</accession>
<gene>
    <name type="primary">lga1</name>
    <name type="synonym">kdg1</name>
</gene>
<protein>
    <recommendedName>
        <fullName>L-threo-3-deoxy-hexylosonate aldolase</fullName>
        <ecNumber>4.1.2.54</ecNumber>
    </recommendedName>
    <alternativeName>
        <fullName>L-threo-3-deoxy-hexulosonate aldolase</fullName>
    </alternativeName>
</protein>
<sequence>MAPPSLPCGIYAPTMTFFHPESEDIDIPTIKHHAQRLAKAGLAGLVVMGSNGEAVHCTRDEKIAVLSATREALDAAGFQSVPVLFGATEGSVRGTIELCKLAAAAGAAAALVLPPSYYRAQTDEASIEAYFVAVADASPIPLVLYNYPGAVSGIDMDSDLLIRLAQHKNIVGTKFTCGNTGKLTRVALATDAKTPFRDGSGYMAFGGMCDFTLQTLVSGGSGIIAGGANVMPKLCVKVWDSYSQGNRDEAEKLQKVLSRGDWPLTKAAIAGTKSAIQTYYGYGGYPRRPLKRLEQARVSAIEEGIREAMEIEKTL</sequence>